<organism>
    <name type="scientific">Schizosaccharomyces pombe (strain 972 / ATCC 24843)</name>
    <name type="common">Fission yeast</name>
    <dbReference type="NCBI Taxonomy" id="284812"/>
    <lineage>
        <taxon>Eukaryota</taxon>
        <taxon>Fungi</taxon>
        <taxon>Dikarya</taxon>
        <taxon>Ascomycota</taxon>
        <taxon>Taphrinomycotina</taxon>
        <taxon>Schizosaccharomycetes</taxon>
        <taxon>Schizosaccharomycetales</taxon>
        <taxon>Schizosaccharomycetaceae</taxon>
        <taxon>Schizosaccharomyces</taxon>
    </lineage>
</organism>
<keyword id="KW-0653">Protein transport</keyword>
<keyword id="KW-1185">Reference proteome</keyword>
<keyword id="KW-0813">Transport</keyword>
<name>VPS33_SCHPO</name>
<protein>
    <recommendedName>
        <fullName>Vacuolar protein sorting-associated protein 33</fullName>
    </recommendedName>
</protein>
<proteinExistence type="inferred from homology"/>
<reference key="1">
    <citation type="journal article" date="2002" name="Nature">
        <title>The genome sequence of Schizosaccharomyces pombe.</title>
        <authorList>
            <person name="Wood V."/>
            <person name="Gwilliam R."/>
            <person name="Rajandream M.A."/>
            <person name="Lyne M.H."/>
            <person name="Lyne R."/>
            <person name="Stewart A."/>
            <person name="Sgouros J.G."/>
            <person name="Peat N."/>
            <person name="Hayles J."/>
            <person name="Baker S.G."/>
            <person name="Basham D."/>
            <person name="Bowman S."/>
            <person name="Brooks K."/>
            <person name="Brown D."/>
            <person name="Brown S."/>
            <person name="Chillingworth T."/>
            <person name="Churcher C.M."/>
            <person name="Collins M."/>
            <person name="Connor R."/>
            <person name="Cronin A."/>
            <person name="Davis P."/>
            <person name="Feltwell T."/>
            <person name="Fraser A."/>
            <person name="Gentles S."/>
            <person name="Goble A."/>
            <person name="Hamlin N."/>
            <person name="Harris D.E."/>
            <person name="Hidalgo J."/>
            <person name="Hodgson G."/>
            <person name="Holroyd S."/>
            <person name="Hornsby T."/>
            <person name="Howarth S."/>
            <person name="Huckle E.J."/>
            <person name="Hunt S."/>
            <person name="Jagels K."/>
            <person name="James K.D."/>
            <person name="Jones L."/>
            <person name="Jones M."/>
            <person name="Leather S."/>
            <person name="McDonald S."/>
            <person name="McLean J."/>
            <person name="Mooney P."/>
            <person name="Moule S."/>
            <person name="Mungall K.L."/>
            <person name="Murphy L.D."/>
            <person name="Niblett D."/>
            <person name="Odell C."/>
            <person name="Oliver K."/>
            <person name="O'Neil S."/>
            <person name="Pearson D."/>
            <person name="Quail M.A."/>
            <person name="Rabbinowitsch E."/>
            <person name="Rutherford K.M."/>
            <person name="Rutter S."/>
            <person name="Saunders D."/>
            <person name="Seeger K."/>
            <person name="Sharp S."/>
            <person name="Skelton J."/>
            <person name="Simmonds M.N."/>
            <person name="Squares R."/>
            <person name="Squares S."/>
            <person name="Stevens K."/>
            <person name="Taylor K."/>
            <person name="Taylor R.G."/>
            <person name="Tivey A."/>
            <person name="Walsh S.V."/>
            <person name="Warren T."/>
            <person name="Whitehead S."/>
            <person name="Woodward J.R."/>
            <person name="Volckaert G."/>
            <person name="Aert R."/>
            <person name="Robben J."/>
            <person name="Grymonprez B."/>
            <person name="Weltjens I."/>
            <person name="Vanstreels E."/>
            <person name="Rieger M."/>
            <person name="Schaefer M."/>
            <person name="Mueller-Auer S."/>
            <person name="Gabel C."/>
            <person name="Fuchs M."/>
            <person name="Duesterhoeft A."/>
            <person name="Fritzc C."/>
            <person name="Holzer E."/>
            <person name="Moestl D."/>
            <person name="Hilbert H."/>
            <person name="Borzym K."/>
            <person name="Langer I."/>
            <person name="Beck A."/>
            <person name="Lehrach H."/>
            <person name="Reinhardt R."/>
            <person name="Pohl T.M."/>
            <person name="Eger P."/>
            <person name="Zimmermann W."/>
            <person name="Wedler H."/>
            <person name="Wambutt R."/>
            <person name="Purnelle B."/>
            <person name="Goffeau A."/>
            <person name="Cadieu E."/>
            <person name="Dreano S."/>
            <person name="Gloux S."/>
            <person name="Lelaure V."/>
            <person name="Mottier S."/>
            <person name="Galibert F."/>
            <person name="Aves S.J."/>
            <person name="Xiang Z."/>
            <person name="Hunt C."/>
            <person name="Moore K."/>
            <person name="Hurst S.M."/>
            <person name="Lucas M."/>
            <person name="Rochet M."/>
            <person name="Gaillardin C."/>
            <person name="Tallada V.A."/>
            <person name="Garzon A."/>
            <person name="Thode G."/>
            <person name="Daga R.R."/>
            <person name="Cruzado L."/>
            <person name="Jimenez J."/>
            <person name="Sanchez M."/>
            <person name="del Rey F."/>
            <person name="Benito J."/>
            <person name="Dominguez A."/>
            <person name="Revuelta J.L."/>
            <person name="Moreno S."/>
            <person name="Armstrong J."/>
            <person name="Forsburg S.L."/>
            <person name="Cerutti L."/>
            <person name="Lowe T."/>
            <person name="McCombie W.R."/>
            <person name="Paulsen I."/>
            <person name="Potashkin J."/>
            <person name="Shpakovski G.V."/>
            <person name="Ussery D."/>
            <person name="Barrell B.G."/>
            <person name="Nurse P."/>
        </authorList>
    </citation>
    <scope>NUCLEOTIDE SEQUENCE [LARGE SCALE GENOMIC DNA]</scope>
    <source>
        <strain>972 / ATCC 24843</strain>
    </source>
</reference>
<reference key="2">
    <citation type="journal article" date="2003" name="Yeast">
        <title>Characterization of vps33+, a gene required for vacuolar biogenesis and protein sorting in Schizosaccharomyces pombe.</title>
        <authorList>
            <person name="Iwaki T."/>
            <person name="Osawa F."/>
            <person name="Onishi M."/>
            <person name="Koga T."/>
            <person name="Fujita Y."/>
            <person name="Hosomi A."/>
            <person name="Tanaka N."/>
            <person name="Fukui Y."/>
            <person name="Takegawa K."/>
        </authorList>
    </citation>
    <scope>IDENTIFICATION</scope>
    <scope>FUNCTION</scope>
</reference>
<accession>Q9P7V6</accession>
<accession>Q9Y7K3</accession>
<evidence type="ECO:0000269" key="1">
    <source>
    </source>
</evidence>
<evidence type="ECO:0000305" key="2"/>
<gene>
    <name type="primary">vps33</name>
    <name type="ORF">SPBC1703.15c</name>
    <name type="ORF">SPBC2A9.01c</name>
</gene>
<comment type="function">
    <text evidence="1">Essential for vacuolar biogenesis, maturation and function. Involved in the sorting of vacuolar proteins from the Golgi apparatus and their targeting to the vacuole.</text>
</comment>
<comment type="similarity">
    <text evidence="2">Belongs to the STXBP/unc-18/SEC1 family.</text>
</comment>
<feature type="chain" id="PRO_0000206310" description="Vacuolar protein sorting-associated protein 33">
    <location>
        <begin position="1"/>
        <end position="592"/>
    </location>
</feature>
<sequence length="592" mass="67600">MTTDVKEKATFKLLDLIDSVTGKKSLLLERDLSGILGQIVTTNTLQEHGIPQVYWFNENIPNDIEKKTIYLCRPTYENAKLVATHVRQFQRDMLRIESTVIVLPTSNILFETVLQEEGVFGELLVTEWPLHAVPLDKDLLSLELGPEKLEESLLQRSTDALIDFERTHGRFPRVSGRGPYAAKMLELLEKTYQEEATINFGKVEGEISALYDSVLLVDRSLDRITPFLTQLTYFGFLDEILGIQQMNVKLPSSLVNRNEASNTGPMKKFSLSSSSSQITKEIRDINFNCIGPYLSKIARKLSSDFEGRRQAKTVNQIRDFVSKLGSLQSEHTSLNIHTGLAETLVQHTKNNYFQKLLQLQHLLVSHADSFTQFNLLDEIIYAEAPVEEVFRVLCLASITTNGLRRKDIDHYRREITQTYGYYHLLTFQALIDAGLLRLRQSTNISLQKSLSYSTWLNTYPLVKDEVDEQNPEDIAYTYSGYGPLSVHIAYDILKGRDNEEKILKLQNMPGTYVDKWTLDQEKVMPKNLKTNVPGKRRVLVFFIGGCTYTELAAFRLLQEKEDLYEFTFMTTGMVTGSSLIRAFIPNIESLNE</sequence>
<dbReference type="EMBL" id="CU329671">
    <property type="protein sequence ID" value="CAB66459.1"/>
    <property type="molecule type" value="Genomic_DNA"/>
</dbReference>
<dbReference type="PIR" id="T50328">
    <property type="entry name" value="T50328"/>
</dbReference>
<dbReference type="RefSeq" id="NP_596210.1">
    <property type="nucleotide sequence ID" value="NM_001022129.2"/>
</dbReference>
<dbReference type="SMR" id="Q9P7V6"/>
<dbReference type="FunCoup" id="Q9P7V6">
    <property type="interactions" value="565"/>
</dbReference>
<dbReference type="STRING" id="284812.Q9P7V6"/>
<dbReference type="iPTMnet" id="Q9P7V6"/>
<dbReference type="PaxDb" id="4896-SPBC1703.15c.1"/>
<dbReference type="EnsemblFungi" id="SPBC1703.15c.1">
    <property type="protein sequence ID" value="SPBC1703.15c.1:pep"/>
    <property type="gene ID" value="SPBC1703.15c"/>
</dbReference>
<dbReference type="GeneID" id="2539880"/>
<dbReference type="KEGG" id="spo:2539880"/>
<dbReference type="PomBase" id="SPBC1703.15c">
    <property type="gene designation" value="vps33"/>
</dbReference>
<dbReference type="VEuPathDB" id="FungiDB:SPBC1703.15c"/>
<dbReference type="eggNOG" id="KOG1302">
    <property type="taxonomic scope" value="Eukaryota"/>
</dbReference>
<dbReference type="HOGENOM" id="CLU_016678_3_1_1"/>
<dbReference type="InParanoid" id="Q9P7V6"/>
<dbReference type="OMA" id="EFHIFFV"/>
<dbReference type="PhylomeDB" id="Q9P7V6"/>
<dbReference type="PRO" id="PR:Q9P7V6"/>
<dbReference type="Proteomes" id="UP000002485">
    <property type="component" value="Chromosome II"/>
</dbReference>
<dbReference type="GO" id="GO:0033263">
    <property type="term" value="C:CORVET complex"/>
    <property type="evidence" value="ECO:0000318"/>
    <property type="project" value="GO_Central"/>
</dbReference>
<dbReference type="GO" id="GO:0000324">
    <property type="term" value="C:fungal-type vacuole"/>
    <property type="evidence" value="ECO:0000318"/>
    <property type="project" value="GO_Central"/>
</dbReference>
<dbReference type="GO" id="GO:1902500">
    <property type="term" value="C:vacuolar HOPS complex"/>
    <property type="evidence" value="ECO:0000266"/>
    <property type="project" value="PomBase"/>
</dbReference>
<dbReference type="GO" id="GO:0005524">
    <property type="term" value="F:ATP binding"/>
    <property type="evidence" value="ECO:0000266"/>
    <property type="project" value="PomBase"/>
</dbReference>
<dbReference type="GO" id="GO:0006886">
    <property type="term" value="P:intracellular protein transport"/>
    <property type="evidence" value="ECO:0000318"/>
    <property type="project" value="GO_Central"/>
</dbReference>
<dbReference type="GO" id="GO:0042144">
    <property type="term" value="P:vacuole fusion, non-autophagic"/>
    <property type="evidence" value="ECO:0000315"/>
    <property type="project" value="PomBase"/>
</dbReference>
<dbReference type="GO" id="GO:0016192">
    <property type="term" value="P:vesicle-mediated transport"/>
    <property type="evidence" value="ECO:0000318"/>
    <property type="project" value="GO_Central"/>
</dbReference>
<dbReference type="FunFam" id="1.25.40.850:FF:000001">
    <property type="entry name" value="vacuolar protein sorting-associated protein 33B isoform X1"/>
    <property type="match status" value="1"/>
</dbReference>
<dbReference type="Gene3D" id="1.25.40.850">
    <property type="match status" value="1"/>
</dbReference>
<dbReference type="Gene3D" id="3.40.50.1910">
    <property type="match status" value="1"/>
</dbReference>
<dbReference type="Gene3D" id="3.40.50.2060">
    <property type="match status" value="1"/>
</dbReference>
<dbReference type="Gene3D" id="3.90.830.10">
    <property type="entry name" value="Syntaxin Binding Protein 1, Chain A, domain 2"/>
    <property type="match status" value="1"/>
</dbReference>
<dbReference type="InterPro" id="IPR043154">
    <property type="entry name" value="Sec-1-like_dom1"/>
</dbReference>
<dbReference type="InterPro" id="IPR043127">
    <property type="entry name" value="Sec-1-like_dom3a"/>
</dbReference>
<dbReference type="InterPro" id="IPR001619">
    <property type="entry name" value="Sec1-like"/>
</dbReference>
<dbReference type="InterPro" id="IPR027482">
    <property type="entry name" value="Sec1-like_dom2"/>
</dbReference>
<dbReference type="InterPro" id="IPR036045">
    <property type="entry name" value="Sec1-like_sf"/>
</dbReference>
<dbReference type="InterPro" id="IPR043155">
    <property type="entry name" value="VPS33_dom3b"/>
</dbReference>
<dbReference type="PANTHER" id="PTHR11679">
    <property type="entry name" value="VESICLE PROTEIN SORTING-ASSOCIATED"/>
    <property type="match status" value="1"/>
</dbReference>
<dbReference type="Pfam" id="PF00995">
    <property type="entry name" value="Sec1"/>
    <property type="match status" value="1"/>
</dbReference>
<dbReference type="SUPFAM" id="SSF56815">
    <property type="entry name" value="Sec1/munc18-like (SM) proteins"/>
    <property type="match status" value="1"/>
</dbReference>